<gene>
    <name evidence="1" type="primary">pgk</name>
    <name type="ordered locus">MMP1532</name>
</gene>
<keyword id="KW-0067">ATP-binding</keyword>
<keyword id="KW-0963">Cytoplasm</keyword>
<keyword id="KW-0324">Glycolysis</keyword>
<keyword id="KW-0418">Kinase</keyword>
<keyword id="KW-0547">Nucleotide-binding</keyword>
<keyword id="KW-1185">Reference proteome</keyword>
<keyword id="KW-0808">Transferase</keyword>
<proteinExistence type="inferred from homology"/>
<reference key="1">
    <citation type="journal article" date="2004" name="J. Bacteriol.">
        <title>Complete genome sequence of the genetically tractable hydrogenotrophic methanogen Methanococcus maripaludis.</title>
        <authorList>
            <person name="Hendrickson E.L."/>
            <person name="Kaul R."/>
            <person name="Zhou Y."/>
            <person name="Bovee D."/>
            <person name="Chapman P."/>
            <person name="Chung J."/>
            <person name="Conway de Macario E."/>
            <person name="Dodsworth J.A."/>
            <person name="Gillett W."/>
            <person name="Graham D.E."/>
            <person name="Hackett M."/>
            <person name="Haydock A.K."/>
            <person name="Kang A."/>
            <person name="Land M.L."/>
            <person name="Levy R."/>
            <person name="Lie T.J."/>
            <person name="Major T.A."/>
            <person name="Moore B.C."/>
            <person name="Porat I."/>
            <person name="Palmeiri A."/>
            <person name="Rouse G."/>
            <person name="Saenphimmachak C."/>
            <person name="Soell D."/>
            <person name="Van Dien S."/>
            <person name="Wang T."/>
            <person name="Whitman W.B."/>
            <person name="Xia Q."/>
            <person name="Zhang Y."/>
            <person name="Larimer F.W."/>
            <person name="Olson M.V."/>
            <person name="Leigh J.A."/>
        </authorList>
    </citation>
    <scope>NUCLEOTIDE SEQUENCE [LARGE SCALE GENOMIC DNA]</scope>
    <source>
        <strain>DSM 14266 / JCM 13030 / NBRC 101832 / S2 / LL</strain>
    </source>
</reference>
<evidence type="ECO:0000255" key="1">
    <source>
        <dbReference type="HAMAP-Rule" id="MF_00145"/>
    </source>
</evidence>
<evidence type="ECO:0000305" key="2"/>
<sequence length="414" mass="45329">MFLTLDDFELEGKTVALRVDINSPIDVNTGDILDDTRIKACSDTIKSLSEKGAKVVILAHQSRPGKKDFTTLEAHAKKLSEVLNMEVTHVDGLICASAREAILAMDNGEIILLENVRLLAEEVLSDWKSWEEITPEKQAKTVMIKKLHPFFDYFVNDAFAAAHRAQPSLVGFSYYVPMLCGRVMEKELFTLTKVLKNPERPCVFALGGAKADDSIEVLKNVLEKQTADQVLTSGVVANIFLVAKGYKIGPNENVIADMGYTNQIEIAKELISKYGDKIVVPIDAALNVDGERVEKELDLNEEITYPIHDMGEKTMKLYEEILKDAKTVVANGPAGVFENKNFLKGTEELLKSTANSKGFSVIGGGHLSAAAEVVGLAGKMDHISTGGGACIEFLAGKKLPVIEMLSKSYEKHKL</sequence>
<feature type="chain" id="PRO_0000146061" description="Phosphoglycerate kinase">
    <location>
        <begin position="1"/>
        <end position="414"/>
    </location>
</feature>
<feature type="binding site" evidence="1">
    <location>
        <begin position="20"/>
        <end position="22"/>
    </location>
    <ligand>
        <name>substrate</name>
    </ligand>
</feature>
<feature type="binding site" evidence="1">
    <location>
        <position position="37"/>
    </location>
    <ligand>
        <name>substrate</name>
    </ligand>
</feature>
<feature type="binding site" evidence="1">
    <location>
        <begin position="60"/>
        <end position="63"/>
    </location>
    <ligand>
        <name>substrate</name>
    </ligand>
</feature>
<feature type="binding site" evidence="1">
    <location>
        <position position="117"/>
    </location>
    <ligand>
        <name>substrate</name>
    </ligand>
</feature>
<feature type="binding site" evidence="1">
    <location>
        <position position="164"/>
    </location>
    <ligand>
        <name>substrate</name>
    </ligand>
</feature>
<feature type="binding site" evidence="1">
    <location>
        <position position="338"/>
    </location>
    <ligand>
        <name>ATP</name>
        <dbReference type="ChEBI" id="CHEBI:30616"/>
    </ligand>
</feature>
<feature type="binding site" evidence="1">
    <location>
        <begin position="364"/>
        <end position="367"/>
    </location>
    <ligand>
        <name>ATP</name>
        <dbReference type="ChEBI" id="CHEBI:30616"/>
    </ligand>
</feature>
<protein>
    <recommendedName>
        <fullName evidence="1">Phosphoglycerate kinase</fullName>
        <ecNumber evidence="1">2.7.2.3</ecNumber>
    </recommendedName>
</protein>
<name>PGK_METMP</name>
<dbReference type="EC" id="2.7.2.3" evidence="1"/>
<dbReference type="EMBL" id="BX950229">
    <property type="protein sequence ID" value="CAF31088.1"/>
    <property type="status" value="ALT_INIT"/>
    <property type="molecule type" value="Genomic_DNA"/>
</dbReference>
<dbReference type="RefSeq" id="WP_013999848.1">
    <property type="nucleotide sequence ID" value="NC_005791.1"/>
</dbReference>
<dbReference type="SMR" id="P62423"/>
<dbReference type="STRING" id="267377.MMP1532"/>
<dbReference type="EnsemblBacteria" id="CAF31088">
    <property type="protein sequence ID" value="CAF31088"/>
    <property type="gene ID" value="MMP1532"/>
</dbReference>
<dbReference type="GeneID" id="10983109"/>
<dbReference type="KEGG" id="mmp:MMP1532"/>
<dbReference type="PATRIC" id="fig|267377.15.peg.1569"/>
<dbReference type="eggNOG" id="arCOG00496">
    <property type="taxonomic scope" value="Archaea"/>
</dbReference>
<dbReference type="HOGENOM" id="CLU_025427_0_2_2"/>
<dbReference type="OrthoDB" id="6575at2157"/>
<dbReference type="UniPathway" id="UPA00109">
    <property type="reaction ID" value="UER00185"/>
</dbReference>
<dbReference type="Proteomes" id="UP000000590">
    <property type="component" value="Chromosome"/>
</dbReference>
<dbReference type="GO" id="GO:0005829">
    <property type="term" value="C:cytosol"/>
    <property type="evidence" value="ECO:0007669"/>
    <property type="project" value="TreeGrafter"/>
</dbReference>
<dbReference type="GO" id="GO:0043531">
    <property type="term" value="F:ADP binding"/>
    <property type="evidence" value="ECO:0007669"/>
    <property type="project" value="TreeGrafter"/>
</dbReference>
<dbReference type="GO" id="GO:0005524">
    <property type="term" value="F:ATP binding"/>
    <property type="evidence" value="ECO:0007669"/>
    <property type="project" value="UniProtKB-KW"/>
</dbReference>
<dbReference type="GO" id="GO:0004618">
    <property type="term" value="F:phosphoglycerate kinase activity"/>
    <property type="evidence" value="ECO:0007669"/>
    <property type="project" value="UniProtKB-UniRule"/>
</dbReference>
<dbReference type="GO" id="GO:0006094">
    <property type="term" value="P:gluconeogenesis"/>
    <property type="evidence" value="ECO:0007669"/>
    <property type="project" value="TreeGrafter"/>
</dbReference>
<dbReference type="GO" id="GO:0006096">
    <property type="term" value="P:glycolytic process"/>
    <property type="evidence" value="ECO:0007669"/>
    <property type="project" value="UniProtKB-UniRule"/>
</dbReference>
<dbReference type="FunFam" id="3.40.50.1260:FF:000006">
    <property type="entry name" value="Phosphoglycerate kinase"/>
    <property type="match status" value="1"/>
</dbReference>
<dbReference type="FunFam" id="3.40.50.1260:FF:000012">
    <property type="entry name" value="Phosphoglycerate kinase"/>
    <property type="match status" value="1"/>
</dbReference>
<dbReference type="Gene3D" id="3.40.50.1260">
    <property type="entry name" value="Phosphoglycerate kinase, N-terminal domain"/>
    <property type="match status" value="2"/>
</dbReference>
<dbReference type="HAMAP" id="MF_00145">
    <property type="entry name" value="Phosphoglyc_kinase"/>
    <property type="match status" value="1"/>
</dbReference>
<dbReference type="InterPro" id="IPR001576">
    <property type="entry name" value="Phosphoglycerate_kinase"/>
</dbReference>
<dbReference type="InterPro" id="IPR015824">
    <property type="entry name" value="Phosphoglycerate_kinase_N"/>
</dbReference>
<dbReference type="InterPro" id="IPR036043">
    <property type="entry name" value="Phosphoglycerate_kinase_sf"/>
</dbReference>
<dbReference type="PANTHER" id="PTHR11406">
    <property type="entry name" value="PHOSPHOGLYCERATE KINASE"/>
    <property type="match status" value="1"/>
</dbReference>
<dbReference type="PANTHER" id="PTHR11406:SF23">
    <property type="entry name" value="PHOSPHOGLYCERATE KINASE 1, CHLOROPLASTIC-RELATED"/>
    <property type="match status" value="1"/>
</dbReference>
<dbReference type="Pfam" id="PF00162">
    <property type="entry name" value="PGK"/>
    <property type="match status" value="1"/>
</dbReference>
<dbReference type="PIRSF" id="PIRSF000724">
    <property type="entry name" value="Pgk"/>
    <property type="match status" value="1"/>
</dbReference>
<dbReference type="PRINTS" id="PR00477">
    <property type="entry name" value="PHGLYCKINASE"/>
</dbReference>
<dbReference type="SUPFAM" id="SSF53748">
    <property type="entry name" value="Phosphoglycerate kinase"/>
    <property type="match status" value="1"/>
</dbReference>
<comment type="catalytic activity">
    <reaction evidence="1">
        <text>(2R)-3-phosphoglycerate + ATP = (2R)-3-phospho-glyceroyl phosphate + ADP</text>
        <dbReference type="Rhea" id="RHEA:14801"/>
        <dbReference type="ChEBI" id="CHEBI:30616"/>
        <dbReference type="ChEBI" id="CHEBI:57604"/>
        <dbReference type="ChEBI" id="CHEBI:58272"/>
        <dbReference type="ChEBI" id="CHEBI:456216"/>
        <dbReference type="EC" id="2.7.2.3"/>
    </reaction>
</comment>
<comment type="pathway">
    <text evidence="1">Carbohydrate degradation; glycolysis; pyruvate from D-glyceraldehyde 3-phosphate: step 2/5.</text>
</comment>
<comment type="subunit">
    <text evidence="1">Monomer.</text>
</comment>
<comment type="subcellular location">
    <subcellularLocation>
        <location evidence="1">Cytoplasm</location>
    </subcellularLocation>
</comment>
<comment type="similarity">
    <text evidence="1">Belongs to the phosphoglycerate kinase family.</text>
</comment>
<comment type="sequence caution" evidence="2">
    <conflict type="erroneous initiation">
        <sequence resource="EMBL-CDS" id="CAF31088"/>
    </conflict>
</comment>
<organism>
    <name type="scientific">Methanococcus maripaludis (strain DSM 14266 / JCM 13030 / NBRC 101832 / S2 / LL)</name>
    <dbReference type="NCBI Taxonomy" id="267377"/>
    <lineage>
        <taxon>Archaea</taxon>
        <taxon>Methanobacteriati</taxon>
        <taxon>Methanobacteriota</taxon>
        <taxon>Methanomada group</taxon>
        <taxon>Methanococci</taxon>
        <taxon>Methanococcales</taxon>
        <taxon>Methanococcaceae</taxon>
        <taxon>Methanococcus</taxon>
    </lineage>
</organism>
<accession>P62423</accession>